<dbReference type="EC" id="3.5.1.28"/>
<dbReference type="EMBL" id="BA000018">
    <property type="protein sequence ID" value="BAB41653.1"/>
    <property type="molecule type" value="Genomic_DNA"/>
</dbReference>
<dbReference type="PIR" id="B89812">
    <property type="entry name" value="B89812"/>
</dbReference>
<dbReference type="RefSeq" id="WP_001170264.1">
    <property type="nucleotide sequence ID" value="NC_002745.2"/>
</dbReference>
<dbReference type="SMR" id="Q7A7E0"/>
<dbReference type="CAZy" id="CBM50">
    <property type="family name" value="Carbohydrate-Binding Module Family 50"/>
</dbReference>
<dbReference type="EnsemblBacteria" id="BAB41653">
    <property type="protein sequence ID" value="BAB41653"/>
    <property type="gene ID" value="BAB41653"/>
</dbReference>
<dbReference type="KEGG" id="sau:SA0423"/>
<dbReference type="HOGENOM" id="CLU_016043_1_3_9"/>
<dbReference type="GO" id="GO:0009986">
    <property type="term" value="C:cell surface"/>
    <property type="evidence" value="ECO:0007669"/>
    <property type="project" value="UniProtKB-SubCell"/>
</dbReference>
<dbReference type="GO" id="GO:0005576">
    <property type="term" value="C:extracellular region"/>
    <property type="evidence" value="ECO:0007669"/>
    <property type="project" value="UniProtKB-SubCell"/>
</dbReference>
<dbReference type="GO" id="GO:0008932">
    <property type="term" value="F:lytic endotransglycosylase activity"/>
    <property type="evidence" value="ECO:0007669"/>
    <property type="project" value="TreeGrafter"/>
</dbReference>
<dbReference type="GO" id="GO:0008745">
    <property type="term" value="F:N-acetylmuramoyl-L-alanine amidase activity"/>
    <property type="evidence" value="ECO:0007669"/>
    <property type="project" value="UniProtKB-EC"/>
</dbReference>
<dbReference type="GO" id="GO:0071555">
    <property type="term" value="P:cell wall organization"/>
    <property type="evidence" value="ECO:0007669"/>
    <property type="project" value="UniProtKB-KW"/>
</dbReference>
<dbReference type="GO" id="GO:0042742">
    <property type="term" value="P:defense response to bacterium"/>
    <property type="evidence" value="ECO:0007669"/>
    <property type="project" value="UniProtKB-KW"/>
</dbReference>
<dbReference type="GO" id="GO:0000917">
    <property type="term" value="P:division septum assembly"/>
    <property type="evidence" value="ECO:0007669"/>
    <property type="project" value="UniProtKB-KW"/>
</dbReference>
<dbReference type="GO" id="GO:0031640">
    <property type="term" value="P:killing of cells of another organism"/>
    <property type="evidence" value="ECO:0007669"/>
    <property type="project" value="UniProtKB-KW"/>
</dbReference>
<dbReference type="CDD" id="cd00118">
    <property type="entry name" value="LysM"/>
    <property type="match status" value="3"/>
</dbReference>
<dbReference type="Gene3D" id="3.90.1720.10">
    <property type="entry name" value="endopeptidase domain like (from Nostoc punctiforme)"/>
    <property type="match status" value="1"/>
</dbReference>
<dbReference type="Gene3D" id="3.10.350.10">
    <property type="entry name" value="LysM domain"/>
    <property type="match status" value="3"/>
</dbReference>
<dbReference type="InterPro" id="IPR007921">
    <property type="entry name" value="CHAP_dom"/>
</dbReference>
<dbReference type="InterPro" id="IPR018392">
    <property type="entry name" value="LysM_dom"/>
</dbReference>
<dbReference type="InterPro" id="IPR036779">
    <property type="entry name" value="LysM_dom_sf"/>
</dbReference>
<dbReference type="InterPro" id="IPR038765">
    <property type="entry name" value="Papain-like_cys_pep_sf"/>
</dbReference>
<dbReference type="PANTHER" id="PTHR33734">
    <property type="entry name" value="LYSM DOMAIN-CONTAINING GPI-ANCHORED PROTEIN 2"/>
    <property type="match status" value="1"/>
</dbReference>
<dbReference type="PANTHER" id="PTHR33734:SF22">
    <property type="entry name" value="MEMBRANE-BOUND LYTIC MUREIN TRANSGLYCOSYLASE D"/>
    <property type="match status" value="1"/>
</dbReference>
<dbReference type="Pfam" id="PF05257">
    <property type="entry name" value="CHAP"/>
    <property type="match status" value="1"/>
</dbReference>
<dbReference type="Pfam" id="PF01476">
    <property type="entry name" value="LysM"/>
    <property type="match status" value="3"/>
</dbReference>
<dbReference type="SMART" id="SM00257">
    <property type="entry name" value="LysM"/>
    <property type="match status" value="3"/>
</dbReference>
<dbReference type="SUPFAM" id="SSF54001">
    <property type="entry name" value="Cysteine proteinases"/>
    <property type="match status" value="1"/>
</dbReference>
<dbReference type="SUPFAM" id="SSF54106">
    <property type="entry name" value="LysM domain"/>
    <property type="match status" value="3"/>
</dbReference>
<dbReference type="PROSITE" id="PS50911">
    <property type="entry name" value="CHAP"/>
    <property type="match status" value="1"/>
</dbReference>
<dbReference type="PROSITE" id="PS51782">
    <property type="entry name" value="LYSM"/>
    <property type="match status" value="3"/>
</dbReference>
<feature type="signal peptide" evidence="2">
    <location>
        <begin position="1"/>
        <end position="25"/>
    </location>
</feature>
<feature type="chain" id="PRO_0000231623" description="N-acetylmuramoyl-L-alanine amidase sle1">
    <location>
        <begin position="26"/>
        <end position="334"/>
    </location>
</feature>
<feature type="domain" description="LysM 1" evidence="4">
    <location>
        <begin position="27"/>
        <end position="70"/>
    </location>
</feature>
<feature type="domain" description="LysM 2" evidence="4">
    <location>
        <begin position="91"/>
        <end position="134"/>
    </location>
</feature>
<feature type="domain" description="LysM 3" evidence="4">
    <location>
        <begin position="158"/>
        <end position="201"/>
    </location>
</feature>
<feature type="domain" description="Peptidase C51" evidence="3">
    <location>
        <begin position="210"/>
        <end position="334"/>
    </location>
</feature>
<feature type="region of interest" description="Disordered" evidence="5">
    <location>
        <begin position="71"/>
        <end position="90"/>
    </location>
</feature>
<feature type="compositionally biased region" description="Low complexity" evidence="5">
    <location>
        <begin position="71"/>
        <end position="86"/>
    </location>
</feature>
<sequence>MQKKVIAAIIGTSAISAVAATQANAATTHTVKPGESVWAISNKYGISIAKLKSLNNLTSNLIFPNQVLKVSGSSNSTSNSSRPSTNSGGGSYYTVQAGDSLSLIASKYGTTYQNIMRLNGLNNFFIYPGQKLKVSGTASSSNAASNSSRPSTNSGGGSYYTVQAGDSLSLIASKYGTTYQKIMSLNGLNNFFIYPGQKLKVTGNASTNSGSATTTNRGYNTPVFSHQNLYTWGQCTYHVFNRRAEIGKGISTYWWNANNWDNAAAADGYTIDNRPTVGSIAQTDVGYYGHVMFVERVNNDGSILVSEMNYSAAPGILTYRTVPAYQVNNYRYIH</sequence>
<organism>
    <name type="scientific">Staphylococcus aureus (strain N315)</name>
    <dbReference type="NCBI Taxonomy" id="158879"/>
    <lineage>
        <taxon>Bacteria</taxon>
        <taxon>Bacillati</taxon>
        <taxon>Bacillota</taxon>
        <taxon>Bacilli</taxon>
        <taxon>Bacillales</taxon>
        <taxon>Staphylococcaceae</taxon>
        <taxon>Staphylococcus</taxon>
    </lineage>
</organism>
<protein>
    <recommendedName>
        <fullName>N-acetylmuramoyl-L-alanine amidase sle1</fullName>
        <ecNumber>3.5.1.28</ecNumber>
    </recommendedName>
</protein>
<evidence type="ECO:0000250" key="1"/>
<evidence type="ECO:0000255" key="2"/>
<evidence type="ECO:0000255" key="3">
    <source>
        <dbReference type="PROSITE-ProRule" id="PRU00048"/>
    </source>
</evidence>
<evidence type="ECO:0000255" key="4">
    <source>
        <dbReference type="PROSITE-ProRule" id="PRU01118"/>
    </source>
</evidence>
<evidence type="ECO:0000256" key="5">
    <source>
        <dbReference type="SAM" id="MobiDB-lite"/>
    </source>
</evidence>
<gene>
    <name type="primary">sle1</name>
    <name type="synonym">aaa</name>
    <name type="ordered locus">SA0423</name>
</gene>
<reference key="1">
    <citation type="journal article" date="2001" name="Lancet">
        <title>Whole genome sequencing of meticillin-resistant Staphylococcus aureus.</title>
        <authorList>
            <person name="Kuroda M."/>
            <person name="Ohta T."/>
            <person name="Uchiyama I."/>
            <person name="Baba T."/>
            <person name="Yuzawa H."/>
            <person name="Kobayashi I."/>
            <person name="Cui L."/>
            <person name="Oguchi A."/>
            <person name="Aoki K."/>
            <person name="Nagai Y."/>
            <person name="Lian J.-Q."/>
            <person name="Ito T."/>
            <person name="Kanamori M."/>
            <person name="Matsumaru H."/>
            <person name="Maruyama A."/>
            <person name="Murakami H."/>
            <person name="Hosoyama A."/>
            <person name="Mizutani-Ui Y."/>
            <person name="Takahashi N.K."/>
            <person name="Sawano T."/>
            <person name="Inoue R."/>
            <person name="Kaito C."/>
            <person name="Sekimizu K."/>
            <person name="Hirakawa H."/>
            <person name="Kuhara S."/>
            <person name="Goto S."/>
            <person name="Yabuzaki J."/>
            <person name="Kanehisa M."/>
            <person name="Yamashita A."/>
            <person name="Oshima K."/>
            <person name="Furuya K."/>
            <person name="Yoshino C."/>
            <person name="Shiba T."/>
            <person name="Hattori M."/>
            <person name="Ogasawara N."/>
            <person name="Hayashi H."/>
            <person name="Hiramatsu K."/>
        </authorList>
    </citation>
    <scope>NUCLEOTIDE SEQUENCE [LARGE SCALE GENOMIC DNA]</scope>
    <source>
        <strain>N315</strain>
    </source>
</reference>
<reference key="2">
    <citation type="submission" date="2007-10" db="UniProtKB">
        <title>Shotgun proteomic analysis of total and membrane protein extracts of S. aureus strain N315.</title>
        <authorList>
            <person name="Vaezzadeh A.R."/>
            <person name="Deshusses J."/>
            <person name="Lescuyer P."/>
            <person name="Hochstrasser D.F."/>
        </authorList>
    </citation>
    <scope>IDENTIFICATION BY MASS SPECTROMETRY [LARGE SCALE ANALYSIS]</scope>
    <source>
        <strain>N315</strain>
    </source>
</reference>
<keyword id="KW-0929">Antimicrobial</keyword>
<keyword id="KW-0081">Bacteriolytic enzyme</keyword>
<keyword id="KW-0131">Cell cycle</keyword>
<keyword id="KW-0132">Cell division</keyword>
<keyword id="KW-0961">Cell wall biogenesis/degradation</keyword>
<keyword id="KW-0378">Hydrolase</keyword>
<keyword id="KW-0677">Repeat</keyword>
<keyword id="KW-0964">Secreted</keyword>
<keyword id="KW-0717">Septation</keyword>
<keyword id="KW-0732">Signal</keyword>
<keyword id="KW-0843">Virulence</keyword>
<comment type="function">
    <text evidence="1">Peptidoglycan hydrolase involved in the splitting of the septum during cell division.</text>
</comment>
<comment type="catalytic activity">
    <reaction>
        <text>Hydrolyzes the link between N-acetylmuramoyl residues and L-amino acid residues in certain cell-wall glycopeptides.</text>
        <dbReference type="EC" id="3.5.1.28"/>
    </reaction>
</comment>
<comment type="subcellular location">
    <subcellularLocation>
        <location evidence="1">Secreted</location>
    </subcellularLocation>
    <subcellularLocation>
        <location evidence="1">Cell surface</location>
    </subcellularLocation>
</comment>
<accession>Q7A7E0</accession>
<proteinExistence type="evidence at protein level"/>
<name>SLE1_STAAN</name>